<protein>
    <recommendedName>
        <fullName>Uncharacterized HTH-type transcriptional regulator HI_0893</fullName>
    </recommendedName>
</protein>
<reference key="1">
    <citation type="journal article" date="1995" name="Science">
        <title>Whole-genome random sequencing and assembly of Haemophilus influenzae Rd.</title>
        <authorList>
            <person name="Fleischmann R.D."/>
            <person name="Adams M.D."/>
            <person name="White O."/>
            <person name="Clayton R.A."/>
            <person name="Kirkness E.F."/>
            <person name="Kerlavage A.R."/>
            <person name="Bult C.J."/>
            <person name="Tomb J.-F."/>
            <person name="Dougherty B.A."/>
            <person name="Merrick J.M."/>
            <person name="McKenney K."/>
            <person name="Sutton G.G."/>
            <person name="FitzHugh W."/>
            <person name="Fields C.A."/>
            <person name="Gocayne J.D."/>
            <person name="Scott J.D."/>
            <person name="Shirley R."/>
            <person name="Liu L.-I."/>
            <person name="Glodek A."/>
            <person name="Kelley J.M."/>
            <person name="Weidman J.F."/>
            <person name="Phillips C.A."/>
            <person name="Spriggs T."/>
            <person name="Hedblom E."/>
            <person name="Cotton M.D."/>
            <person name="Utterback T.R."/>
            <person name="Hanna M.C."/>
            <person name="Nguyen D.T."/>
            <person name="Saudek D.M."/>
            <person name="Brandon R.C."/>
            <person name="Fine L.D."/>
            <person name="Fritchman J.L."/>
            <person name="Fuhrmann J.L."/>
            <person name="Geoghagen N.S.M."/>
            <person name="Gnehm C.L."/>
            <person name="McDonald L.A."/>
            <person name="Small K.V."/>
            <person name="Fraser C.M."/>
            <person name="Smith H.O."/>
            <person name="Venter J.C."/>
        </authorList>
    </citation>
    <scope>NUCLEOTIDE SEQUENCE [LARGE SCALE GENOMIC DNA]</scope>
    <source>
        <strain>ATCC 51907 / DSM 11121 / KW20 / Rd</strain>
    </source>
</reference>
<dbReference type="EMBL" id="L42023">
    <property type="protein sequence ID" value="AAC22553.1"/>
    <property type="molecule type" value="Genomic_DNA"/>
</dbReference>
<dbReference type="PIR" id="F64100">
    <property type="entry name" value="F64100"/>
</dbReference>
<dbReference type="RefSeq" id="NP_439054.1">
    <property type="nucleotide sequence ID" value="NC_000907.1"/>
</dbReference>
<dbReference type="PDB" id="3QKX">
    <property type="method" value="X-ray"/>
    <property type="resolution" value="2.35 A"/>
    <property type="chains" value="A/B=1-187"/>
</dbReference>
<dbReference type="PDBsum" id="3QKX"/>
<dbReference type="SMR" id="P44923"/>
<dbReference type="STRING" id="71421.HI_0893"/>
<dbReference type="DNASU" id="949896"/>
<dbReference type="EnsemblBacteria" id="AAC22553">
    <property type="protein sequence ID" value="AAC22553"/>
    <property type="gene ID" value="HI_0893"/>
</dbReference>
<dbReference type="KEGG" id="hin:HI_0893"/>
<dbReference type="PATRIC" id="fig|71421.8.peg.935"/>
<dbReference type="eggNOG" id="COG1309">
    <property type="taxonomic scope" value="Bacteria"/>
</dbReference>
<dbReference type="HOGENOM" id="CLU_069356_12_9_6"/>
<dbReference type="OrthoDB" id="63332at2"/>
<dbReference type="PhylomeDB" id="P44923"/>
<dbReference type="BioCyc" id="HINF71421:G1GJ1-933-MONOMER"/>
<dbReference type="EvolutionaryTrace" id="P44923"/>
<dbReference type="Proteomes" id="UP000000579">
    <property type="component" value="Chromosome"/>
</dbReference>
<dbReference type="GO" id="GO:0003700">
    <property type="term" value="F:DNA-binding transcription factor activity"/>
    <property type="evidence" value="ECO:0000318"/>
    <property type="project" value="GO_Central"/>
</dbReference>
<dbReference type="GO" id="GO:0000976">
    <property type="term" value="F:transcription cis-regulatory region binding"/>
    <property type="evidence" value="ECO:0000318"/>
    <property type="project" value="GO_Central"/>
</dbReference>
<dbReference type="GO" id="GO:0006355">
    <property type="term" value="P:regulation of DNA-templated transcription"/>
    <property type="evidence" value="ECO:0000318"/>
    <property type="project" value="GO_Central"/>
</dbReference>
<dbReference type="Gene3D" id="1.10.357.10">
    <property type="entry name" value="Tetracycline Repressor, domain 2"/>
    <property type="match status" value="1"/>
</dbReference>
<dbReference type="InterPro" id="IPR023772">
    <property type="entry name" value="DNA-bd_HTH_TetR-type_CS"/>
</dbReference>
<dbReference type="InterPro" id="IPR009057">
    <property type="entry name" value="Homeodomain-like_sf"/>
</dbReference>
<dbReference type="InterPro" id="IPR050624">
    <property type="entry name" value="HTH-type_Tx_Regulator"/>
</dbReference>
<dbReference type="InterPro" id="IPR001647">
    <property type="entry name" value="HTH_TetR"/>
</dbReference>
<dbReference type="InterPro" id="IPR054422">
    <property type="entry name" value="TetR-like_HI_0893_C"/>
</dbReference>
<dbReference type="PANTHER" id="PTHR43479">
    <property type="entry name" value="ACREF/ENVCD OPERON REPRESSOR-RELATED"/>
    <property type="match status" value="1"/>
</dbReference>
<dbReference type="PANTHER" id="PTHR43479:SF11">
    <property type="entry name" value="ACREF_ENVCD OPERON REPRESSOR-RELATED"/>
    <property type="match status" value="1"/>
</dbReference>
<dbReference type="Pfam" id="PF22604">
    <property type="entry name" value="TetR_HI_0893_C"/>
    <property type="match status" value="1"/>
</dbReference>
<dbReference type="Pfam" id="PF00440">
    <property type="entry name" value="TetR_N"/>
    <property type="match status" value="1"/>
</dbReference>
<dbReference type="PRINTS" id="PR00455">
    <property type="entry name" value="HTHTETR"/>
</dbReference>
<dbReference type="SUPFAM" id="SSF46689">
    <property type="entry name" value="Homeodomain-like"/>
    <property type="match status" value="1"/>
</dbReference>
<dbReference type="PROSITE" id="PS01081">
    <property type="entry name" value="HTH_TETR_1"/>
    <property type="match status" value="1"/>
</dbReference>
<dbReference type="PROSITE" id="PS50977">
    <property type="entry name" value="HTH_TETR_2"/>
    <property type="match status" value="1"/>
</dbReference>
<accession>P44923</accession>
<keyword id="KW-0002">3D-structure</keyword>
<keyword id="KW-0238">DNA-binding</keyword>
<keyword id="KW-1185">Reference proteome</keyword>
<keyword id="KW-0677">Repeat</keyword>
<keyword id="KW-0804">Transcription</keyword>
<keyword id="KW-0805">Transcription regulation</keyword>
<name>Y893_HAEIN</name>
<evidence type="ECO:0000255" key="1">
    <source>
        <dbReference type="PROSITE-ProRule" id="PRU00335"/>
    </source>
</evidence>
<evidence type="ECO:0007829" key="2">
    <source>
        <dbReference type="PDB" id="3QKX"/>
    </source>
</evidence>
<organism>
    <name type="scientific">Haemophilus influenzae (strain ATCC 51907 / DSM 11121 / KW20 / Rd)</name>
    <dbReference type="NCBI Taxonomy" id="71421"/>
    <lineage>
        <taxon>Bacteria</taxon>
        <taxon>Pseudomonadati</taxon>
        <taxon>Pseudomonadota</taxon>
        <taxon>Gammaproteobacteria</taxon>
        <taxon>Pasteurellales</taxon>
        <taxon>Pasteurellaceae</taxon>
        <taxon>Haemophilus</taxon>
    </lineage>
</organism>
<proteinExistence type="evidence at protein level"/>
<gene>
    <name type="ordered locus">HI_0893</name>
</gene>
<feature type="chain" id="PRO_0000070657" description="Uncharacterized HTH-type transcriptional regulator HI_0893">
    <location>
        <begin position="1"/>
        <end position="187"/>
    </location>
</feature>
<feature type="domain" description="HTH tetR-type" evidence="1">
    <location>
        <begin position="6"/>
        <end position="66"/>
    </location>
</feature>
<feature type="DNA-binding region" description="H-T-H motif" evidence="1">
    <location>
        <begin position="29"/>
        <end position="48"/>
    </location>
</feature>
<feature type="helix" evidence="2">
    <location>
        <begin position="5"/>
        <end position="22"/>
    </location>
</feature>
<feature type="helix" evidence="2">
    <location>
        <begin position="30"/>
        <end position="37"/>
    </location>
</feature>
<feature type="helix" evidence="2">
    <location>
        <begin position="41"/>
        <end position="47"/>
    </location>
</feature>
<feature type="strand" evidence="2">
    <location>
        <begin position="48"/>
        <end position="50"/>
    </location>
</feature>
<feature type="helix" evidence="2">
    <location>
        <begin position="51"/>
        <end position="71"/>
    </location>
</feature>
<feature type="helix" evidence="2">
    <location>
        <begin position="80"/>
        <end position="97"/>
    </location>
</feature>
<feature type="helix" evidence="2">
    <location>
        <begin position="99"/>
        <end position="108"/>
    </location>
</feature>
<feature type="turn" evidence="2">
    <location>
        <begin position="112"/>
        <end position="120"/>
    </location>
</feature>
<feature type="helix" evidence="2">
    <location>
        <begin position="125"/>
        <end position="136"/>
    </location>
</feature>
<feature type="helix" evidence="2">
    <location>
        <begin position="144"/>
        <end position="150"/>
    </location>
</feature>
<feature type="helix" evidence="2">
    <location>
        <begin position="153"/>
        <end position="164"/>
    </location>
</feature>
<feature type="helix" evidence="2">
    <location>
        <begin position="171"/>
        <end position="183"/>
    </location>
</feature>
<sequence>MRQAKTDLAEQIFSATDRLMAREGLNQLSMLKLAKEANVAAGTIYLYFKNKDELLEQFAHRVFSMFMATLEKDFDETKPFFEQYRQMWKNIWYFLQENPTILSNLKQYESLPNFKDICKNIKNCRWDLFCHQAQKAGLLAELSEDILFLLSLKTAINLASDAKFIDFDLKPEILESVIERSWRAIQK</sequence>